<protein>
    <recommendedName>
        <fullName>Uncharacterized PE-PGRS family protein PE_PGRS36</fullName>
    </recommendedName>
</protein>
<proteinExistence type="inferred from homology"/>
<keyword id="KW-1185">Reference proteome</keyword>
<feature type="chain" id="PRO_0000216167" description="Uncharacterized PE-PGRS family protein PE_PGRS36">
    <location>
        <begin position="1"/>
        <end position="491"/>
    </location>
</feature>
<feature type="domain" description="PE" evidence="1">
    <location>
        <begin position="1"/>
        <end position="92"/>
    </location>
</feature>
<feature type="region of interest" description="Disordered" evidence="2">
    <location>
        <begin position="114"/>
        <end position="156"/>
    </location>
</feature>
<feature type="region of interest" description="Disordered" evidence="2">
    <location>
        <begin position="376"/>
        <end position="400"/>
    </location>
</feature>
<feature type="region of interest" description="Disordered" evidence="2">
    <location>
        <begin position="419"/>
        <end position="491"/>
    </location>
</feature>
<feature type="compositionally biased region" description="Gly residues" evidence="2">
    <location>
        <begin position="128"/>
        <end position="145"/>
    </location>
</feature>
<feature type="compositionally biased region" description="Gly residues" evidence="2">
    <location>
        <begin position="432"/>
        <end position="480"/>
    </location>
</feature>
<name>PG36_MYCBO</name>
<sequence>MSFVIASPEALLAAATDLAAIRSTIRAANAAAAVPTTGALAPAADEVSAGIAALFGAQAQSYQAVSAQAAAFHDRFVQLLNAGGGSYASAEIANAQQNLLNAVNAPTQTLLGRPLVGDGADGASGPVGQPGGDGGILWGNGGNGGDSTSPGVAGGAGGSAGLIGNGGRGGNGAPGGAGGNGGLGGLLLGNGGAGGVGGTGDNGVGDLGAGGGGGDGGLGGRAGLIGHGGAGGNGGDGGHGGSGKAGGSGGSGGFGQFGGAGGLLYGNGGAAGSGGNGGDAGTGVSSDGFAGLGGSGGRGGDAGLIGVGGGGGNGGDPGLGARLFQVGSRGGDGGVGGWLYGDGGGGGDGGNGGLPFIGSTNAGNGGSARLIGNGGAGGSGGSGAPGSVSSGGVGGAGNPGGSGGNGGVWYGNGGAGGAAGQGGPGMNTTSPGGPGGVGGHGGTAILFGDGGAGGAGAAGGPGTPDGAAGPGGSGGTGGLLFGVPGPSGPDG</sequence>
<organism>
    <name type="scientific">Mycobacterium bovis (strain ATCC BAA-935 / AF2122/97)</name>
    <dbReference type="NCBI Taxonomy" id="233413"/>
    <lineage>
        <taxon>Bacteria</taxon>
        <taxon>Bacillati</taxon>
        <taxon>Actinomycetota</taxon>
        <taxon>Actinomycetes</taxon>
        <taxon>Mycobacteriales</taxon>
        <taxon>Mycobacteriaceae</taxon>
        <taxon>Mycobacterium</taxon>
        <taxon>Mycobacterium tuberculosis complex</taxon>
    </lineage>
</organism>
<reference key="1">
    <citation type="journal article" date="2003" name="Proc. Natl. Acad. Sci. U.S.A.">
        <title>The complete genome sequence of Mycobacterium bovis.</title>
        <authorList>
            <person name="Garnier T."/>
            <person name="Eiglmeier K."/>
            <person name="Camus J.-C."/>
            <person name="Medina N."/>
            <person name="Mansoor H."/>
            <person name="Pryor M."/>
            <person name="Duthoy S."/>
            <person name="Grondin S."/>
            <person name="Lacroix C."/>
            <person name="Monsempe C."/>
            <person name="Simon S."/>
            <person name="Harris B."/>
            <person name="Atkin R."/>
            <person name="Doggett J."/>
            <person name="Mayes R."/>
            <person name="Keating L."/>
            <person name="Wheeler P.R."/>
            <person name="Parkhill J."/>
            <person name="Barrell B.G."/>
            <person name="Cole S.T."/>
            <person name="Gordon S.V."/>
            <person name="Hewinson R.G."/>
        </authorList>
    </citation>
    <scope>NUCLEOTIDE SEQUENCE [LARGE SCALE GENOMIC DNA]</scope>
    <source>
        <strain>ATCC BAA-935 / AF2122/97</strain>
    </source>
</reference>
<reference key="2">
    <citation type="journal article" date="2017" name="Genome Announc.">
        <title>Updated reference genome sequence and annotation of Mycobacterium bovis AF2122/97.</title>
        <authorList>
            <person name="Malone K.M."/>
            <person name="Farrell D."/>
            <person name="Stuber T.P."/>
            <person name="Schubert O.T."/>
            <person name="Aebersold R."/>
            <person name="Robbe-Austerman S."/>
            <person name="Gordon S.V."/>
        </authorList>
    </citation>
    <scope>NUCLEOTIDE SEQUENCE [LARGE SCALE GENOMIC DNA]</scope>
    <scope>GENOME REANNOTATION</scope>
    <source>
        <strain>ATCC BAA-935 / AF2122/97</strain>
    </source>
</reference>
<gene>
    <name type="primary">PE_PGRS36</name>
    <name type="ordered locus">BQ2027_MB2125C</name>
</gene>
<evidence type="ECO:0000255" key="1"/>
<evidence type="ECO:0000256" key="2">
    <source>
        <dbReference type="SAM" id="MobiDB-lite"/>
    </source>
</evidence>
<evidence type="ECO:0000305" key="3"/>
<comment type="similarity">
    <text evidence="3">Belongs to the mycobacterial PE family. PGRS subfamily.</text>
</comment>
<dbReference type="EMBL" id="LT708304">
    <property type="protein sequence ID" value="SIU00732.1"/>
    <property type="molecule type" value="Genomic_DNA"/>
</dbReference>
<dbReference type="RefSeq" id="NP_855774.1">
    <property type="nucleotide sequence ID" value="NC_002945.3"/>
</dbReference>
<dbReference type="RefSeq" id="WP_003410786.1">
    <property type="nucleotide sequence ID" value="NC_002945.4"/>
</dbReference>
<dbReference type="SMR" id="P0A689"/>
<dbReference type="KEGG" id="mbo:BQ2027_MB2125C"/>
<dbReference type="PATRIC" id="fig|233413.5.peg.2336"/>
<dbReference type="Proteomes" id="UP000001419">
    <property type="component" value="Chromosome"/>
</dbReference>
<dbReference type="FunFam" id="1.10.287.850:FF:000001">
    <property type="entry name" value="PE_PGRS39"/>
    <property type="match status" value="1"/>
</dbReference>
<dbReference type="Gene3D" id="1.10.287.850">
    <property type="entry name" value="HP0062-like domain"/>
    <property type="match status" value="1"/>
</dbReference>
<dbReference type="InterPro" id="IPR000084">
    <property type="entry name" value="PE-PGRS_N"/>
</dbReference>
<dbReference type="InterPro" id="IPR048996">
    <property type="entry name" value="PGRS_rpt"/>
</dbReference>
<dbReference type="Pfam" id="PF00934">
    <property type="entry name" value="PE"/>
    <property type="match status" value="1"/>
</dbReference>
<dbReference type="Pfam" id="PF21526">
    <property type="entry name" value="PGRS"/>
    <property type="match status" value="1"/>
</dbReference>
<dbReference type="PRINTS" id="PR01228">
    <property type="entry name" value="EGGSHELL"/>
</dbReference>
<dbReference type="SUPFAM" id="SSF140459">
    <property type="entry name" value="PE/PPE dimer-like"/>
    <property type="match status" value="1"/>
</dbReference>
<accession>P0A689</accession>
<accession>A0A1R3Y0B0</accession>
<accession>Q10707</accession>
<accession>X2BK49</accession>